<name>CDNC_ECOM1</name>
<gene>
    <name evidence="2" type="primary">cdnC</name>
    <name evidence="7" type="ORF">HMPREF9540_01758</name>
</gene>
<accession>D7Y2H2</accession>
<reference key="1">
    <citation type="submission" date="2010-05" db="EMBL/GenBank/DDBJ databases">
        <authorList>
            <person name="Weinstock G."/>
            <person name="Sodergren E."/>
            <person name="Clifton S."/>
            <person name="Fulton L."/>
            <person name="Fulton B."/>
            <person name="Courtney L."/>
            <person name="Fronick C."/>
            <person name="Harrison M."/>
            <person name="Strong C."/>
            <person name="Farmer C."/>
            <person name="Delahaunty K."/>
            <person name="Markovic C."/>
            <person name="Hall O."/>
            <person name="Minx P."/>
            <person name="Tomlinson C."/>
            <person name="Mitreva M."/>
            <person name="Hou S."/>
            <person name="Chen J."/>
            <person name="Wollam A."/>
            <person name="Pepin K.H."/>
            <person name="Johnson M."/>
            <person name="Bhonagiri V."/>
            <person name="Zhang X."/>
            <person name="Suruliraj S."/>
            <person name="Warren W."/>
            <person name="Chinwalla A."/>
            <person name="Mardis E.R."/>
            <person name="Wilson R.K."/>
        </authorList>
    </citation>
    <scope>NUCLEOTIDE SEQUENCE [LARGE SCALE GENOMIC DNA]</scope>
    <source>
        <strain>MS 115-1</strain>
    </source>
</reference>
<reference key="2">
    <citation type="journal article" date="2019" name="Nature">
        <title>Bacterial cGAS-like enzymes synthesize diverse nucleotide signals.</title>
        <authorList>
            <person name="Whiteley A.T."/>
            <person name="Eaglesham J.B."/>
            <person name="de Oliveira Mann C.C."/>
            <person name="Morehouse B.R."/>
            <person name="Lowey B."/>
            <person name="Nieminen E.A."/>
            <person name="Danilchanka O."/>
            <person name="King D.S."/>
            <person name="Lee A.S.Y."/>
            <person name="Mekalanos J.J."/>
            <person name="Kranzusch P.J."/>
        </authorList>
    </citation>
    <scope>NOMENCLATURE</scope>
    <scope>SIMILARITY</scope>
    <source>
        <strain>MS 115-1</strain>
    </source>
</reference>
<reference key="3">
    <citation type="journal article" date="2020" name="Nat. Microbiol.">
        <title>Diversity and classification of cyclic-oligonucleotide-based anti-phage signalling systems.</title>
        <authorList>
            <person name="Millman A."/>
            <person name="Melamed S."/>
            <person name="Amitai G."/>
            <person name="Sorek R."/>
        </authorList>
    </citation>
    <scope>CLASSIFICATION AND NOMENCLATURE</scope>
</reference>
<reference evidence="8 9 10" key="4">
    <citation type="journal article" date="2020" name="Mol. Cell">
        <title>HORMA Domain Proteins and a Trip13-like ATPase Regulate Bacterial cGAS-like Enzymes to Mediate Bacteriophage Immunity.</title>
        <authorList>
            <person name="Ye Q."/>
            <person name="Lau R.K."/>
            <person name="Mathews I.T."/>
            <person name="Birkholz E.A."/>
            <person name="Watrous J.D."/>
            <person name="Azimi C.S."/>
            <person name="Pogliano J."/>
            <person name="Jain M."/>
            <person name="Corbett K.D."/>
        </authorList>
    </citation>
    <scope>X-RAY CRYSTALLOGRAPHY (1.50 ANGSTROMS) OF 4-321 IN COMPLEX WITH ATP AND MAGNESIUM</scope>
    <scope>X-RAY CRYSTALLOGRAPHY (2.09 ANGSTROMS) OF 2-321 IN COMPLEX WITH CAP7 AND WITH CLOSURE PEPTIDE</scope>
    <scope>X-RAY CRYSTALLOGRAPHY (2.64 ANGSTROMS) OF 2-321 IN COMPLEX WITH CAP6 AND CAP7</scope>
    <scope>FUNCTION</scope>
    <scope>CATALYTIC ACTIVITY</scope>
    <scope>COFACTOR</scope>
    <scope>ACTIVITY REGULATION</scope>
    <scope>INTERACTION WITH CAP7</scope>
    <scope>DOMAIN</scope>
    <scope>MUTAGENESIS OF 23-LYS--LYS-34; ARG-30; ARG-54; 72-ASP--ASP-74 AND LYS-170</scope>
    <scope>ATP-BINDING</scope>
    <source>
        <strain>MS 115-1</strain>
    </source>
</reference>
<feature type="chain" id="PRO_0000451838" description="Cyclic AMP-AMP-AMP synthase">
    <location>
        <begin position="1"/>
        <end position="321"/>
    </location>
</feature>
<feature type="binding site" evidence="1 8 9">
    <location>
        <position position="63"/>
    </location>
    <ligand>
        <name>ATP</name>
        <dbReference type="ChEBI" id="CHEBI:30616"/>
    </ligand>
</feature>
<feature type="binding site" evidence="1 10">
    <location>
        <position position="72"/>
    </location>
    <ligand>
        <name>Mg(2+)</name>
        <dbReference type="ChEBI" id="CHEBI:18420"/>
    </ligand>
</feature>
<feature type="binding site" evidence="1 8 9">
    <location>
        <position position="74"/>
    </location>
    <ligand>
        <name>ATP</name>
        <dbReference type="ChEBI" id="CHEBI:30616"/>
    </ligand>
</feature>
<feature type="binding site" evidence="1 8 9 10">
    <location>
        <position position="74"/>
    </location>
    <ligand>
        <name>Mg(2+)</name>
        <dbReference type="ChEBI" id="CHEBI:18420"/>
    </ligand>
</feature>
<feature type="binding site" evidence="1 8 9">
    <location>
        <position position="162"/>
    </location>
    <ligand>
        <name>ATP</name>
        <dbReference type="ChEBI" id="CHEBI:30616"/>
    </ligand>
</feature>
<feature type="binding site" evidence="1 8 9">
    <location>
        <position position="185"/>
    </location>
    <ligand>
        <name>ATP</name>
        <dbReference type="ChEBI" id="CHEBI:30616"/>
    </ligand>
</feature>
<feature type="binding site" evidence="1 8 9">
    <location>
        <begin position="201"/>
        <end position="203"/>
    </location>
    <ligand>
        <name>ATP</name>
        <dbReference type="ChEBI" id="CHEBI:30616"/>
    </ligand>
</feature>
<feature type="binding site" evidence="1 8">
    <location>
        <position position="270"/>
    </location>
    <ligand>
        <name>ATP</name>
        <dbReference type="ChEBI" id="CHEBI:30616"/>
    </ligand>
</feature>
<feature type="mutagenesis site" description="Prevents formation of second messenger, no longer binds DNA." evidence="1">
    <original>KVKADDFREQAK</original>
    <variation>AVKADDFAEQAA</variation>
    <location>
        <begin position="23"/>
        <end position="34"/>
    </location>
</feature>
<feature type="mutagenesis site" description="Prevents formation of second messenger, decreased DNA-binding." evidence="1">
    <original>R</original>
    <variation>A</variation>
    <location>
        <position position="30"/>
    </location>
</feature>
<feature type="mutagenesis site" description="Prevents formation of second messenger." evidence="1">
    <original>R</original>
    <variation>A</variation>
    <location>
        <position position="54"/>
    </location>
</feature>
<feature type="mutagenesis site" description="Prevents formation of second messenger. No longer confers phage immunity." evidence="1">
    <original>DID</original>
    <variation>NIN</variation>
    <location>
        <begin position="72"/>
        <end position="74"/>
    </location>
</feature>
<feature type="mutagenesis site" description="Prevents formation of second messenger." evidence="1">
    <original>K</original>
    <variation>A</variation>
    <location>
        <position position="170"/>
    </location>
</feature>
<feature type="turn" evidence="13">
    <location>
        <begin position="3"/>
        <end position="5"/>
    </location>
</feature>
<feature type="helix" evidence="11">
    <location>
        <begin position="8"/>
        <end position="18"/>
    </location>
</feature>
<feature type="helix" evidence="11">
    <location>
        <begin position="23"/>
        <end position="46"/>
    </location>
</feature>
<feature type="strand" evidence="11">
    <location>
        <begin position="51"/>
        <end position="57"/>
    </location>
</feature>
<feature type="helix" evidence="11">
    <location>
        <begin position="60"/>
        <end position="63"/>
    </location>
</feature>
<feature type="strand" evidence="11">
    <location>
        <begin position="72"/>
        <end position="79"/>
    </location>
</feature>
<feature type="strand" evidence="13">
    <location>
        <begin position="81"/>
        <end position="84"/>
    </location>
</feature>
<feature type="helix" evidence="11">
    <location>
        <begin position="88"/>
        <end position="102"/>
    </location>
</feature>
<feature type="strand" evidence="12">
    <location>
        <begin position="104"/>
        <end position="106"/>
    </location>
</feature>
<feature type="helix" evidence="11">
    <location>
        <begin position="108"/>
        <end position="110"/>
    </location>
</feature>
<feature type="strand" evidence="11">
    <location>
        <begin position="111"/>
        <end position="113"/>
    </location>
</feature>
<feature type="strand" evidence="11">
    <location>
        <begin position="115"/>
        <end position="120"/>
    </location>
</feature>
<feature type="strand" evidence="12">
    <location>
        <begin position="123"/>
        <end position="125"/>
    </location>
</feature>
<feature type="strand" evidence="11">
    <location>
        <begin position="128"/>
        <end position="135"/>
    </location>
</feature>
<feature type="helix" evidence="11">
    <location>
        <begin position="140"/>
        <end position="142"/>
    </location>
</feature>
<feature type="strand" evidence="11">
    <location>
        <begin position="144"/>
        <end position="147"/>
    </location>
</feature>
<feature type="turn" evidence="11">
    <location>
        <begin position="149"/>
        <end position="151"/>
    </location>
</feature>
<feature type="strand" evidence="11">
    <location>
        <begin position="154"/>
        <end position="157"/>
    </location>
</feature>
<feature type="helix" evidence="11">
    <location>
        <begin position="159"/>
        <end position="172"/>
    </location>
</feature>
<feature type="helix" evidence="11">
    <location>
        <begin position="176"/>
        <end position="194"/>
    </location>
</feature>
<feature type="helix" evidence="11">
    <location>
        <begin position="202"/>
        <end position="214"/>
    </location>
</feature>
<feature type="helix" evidence="11">
    <location>
        <begin position="222"/>
        <end position="236"/>
    </location>
</feature>
<feature type="strand" evidence="11">
    <location>
        <begin position="246"/>
        <end position="248"/>
    </location>
</feature>
<feature type="helix" evidence="11">
    <location>
        <begin position="250"/>
        <end position="252"/>
    </location>
</feature>
<feature type="turn" evidence="11">
    <location>
        <begin position="272"/>
        <end position="275"/>
    </location>
</feature>
<feature type="helix" evidence="11">
    <location>
        <begin position="278"/>
        <end position="300"/>
    </location>
</feature>
<feature type="helix" evidence="11">
    <location>
        <begin position="304"/>
        <end position="315"/>
    </location>
</feature>
<keyword id="KW-0002">3D-structure</keyword>
<keyword id="KW-0051">Antiviral defense</keyword>
<keyword id="KW-0067">ATP-binding</keyword>
<keyword id="KW-0460">Magnesium</keyword>
<keyword id="KW-0479">Metal-binding</keyword>
<keyword id="KW-0546">Nucleotide metabolism</keyword>
<keyword id="KW-0547">Nucleotide-binding</keyword>
<keyword id="KW-0548">Nucleotidyltransferase</keyword>
<keyword id="KW-0808">Transferase</keyword>
<dbReference type="EC" id="2.7.7.-" evidence="1"/>
<dbReference type="EC" id="2.7.7.85" evidence="1"/>
<dbReference type="EMBL" id="ADTL01000141">
    <property type="protein sequence ID" value="EFJ98156.1"/>
    <property type="status" value="ALT_INIT"/>
    <property type="molecule type" value="Genomic_DNA"/>
</dbReference>
<dbReference type="RefSeq" id="WP_000102473.1">
    <property type="nucleotide sequence ID" value="NZ_GG771785.1"/>
</dbReference>
<dbReference type="PDB" id="6P80">
    <property type="method" value="X-ray"/>
    <property type="resolution" value="1.50 A"/>
    <property type="chains" value="A=4-321"/>
</dbReference>
<dbReference type="PDB" id="6P8V">
    <property type="method" value="X-ray"/>
    <property type="resolution" value="2.64 A"/>
    <property type="chains" value="G=2-321"/>
</dbReference>
<dbReference type="PDB" id="6U7B">
    <property type="method" value="X-ray"/>
    <property type="resolution" value="2.09 A"/>
    <property type="chains" value="A/C=2-321"/>
</dbReference>
<dbReference type="PDBsum" id="6P80"/>
<dbReference type="PDBsum" id="6P8V"/>
<dbReference type="PDBsum" id="6U7B"/>
<dbReference type="SMR" id="D7Y2H2"/>
<dbReference type="HOGENOM" id="CLU_073286_0_0_6"/>
<dbReference type="GO" id="GO:0005829">
    <property type="term" value="C:cytosol"/>
    <property type="evidence" value="ECO:0007669"/>
    <property type="project" value="TreeGrafter"/>
</dbReference>
<dbReference type="GO" id="GO:0016020">
    <property type="term" value="C:membrane"/>
    <property type="evidence" value="ECO:0007669"/>
    <property type="project" value="TreeGrafter"/>
</dbReference>
<dbReference type="GO" id="GO:0001730">
    <property type="term" value="F:2'-5'-oligoadenylate synthetase activity"/>
    <property type="evidence" value="ECO:0007669"/>
    <property type="project" value="TreeGrafter"/>
</dbReference>
<dbReference type="GO" id="GO:0005524">
    <property type="term" value="F:ATP binding"/>
    <property type="evidence" value="ECO:0007669"/>
    <property type="project" value="UniProtKB-KW"/>
</dbReference>
<dbReference type="GO" id="GO:0106408">
    <property type="term" value="F:diadenylate cyclase activity"/>
    <property type="evidence" value="ECO:0007669"/>
    <property type="project" value="UniProtKB-EC"/>
</dbReference>
<dbReference type="GO" id="GO:0003725">
    <property type="term" value="F:double-stranded RNA binding"/>
    <property type="evidence" value="ECO:0007669"/>
    <property type="project" value="TreeGrafter"/>
</dbReference>
<dbReference type="GO" id="GO:0046872">
    <property type="term" value="F:metal ion binding"/>
    <property type="evidence" value="ECO:0007669"/>
    <property type="project" value="UniProtKB-KW"/>
</dbReference>
<dbReference type="GO" id="GO:0051607">
    <property type="term" value="P:defense response to virus"/>
    <property type="evidence" value="ECO:0007669"/>
    <property type="project" value="UniProtKB-KW"/>
</dbReference>
<dbReference type="GO" id="GO:0009117">
    <property type="term" value="P:nucleotide metabolic process"/>
    <property type="evidence" value="ECO:0007669"/>
    <property type="project" value="UniProtKB-KW"/>
</dbReference>
<dbReference type="CDD" id="cd05400">
    <property type="entry name" value="NT_2-5OAS_ClassI-CCAase"/>
    <property type="match status" value="1"/>
</dbReference>
<dbReference type="Gene3D" id="1.10.1410.20">
    <property type="entry name" value="2'-5'-oligoadenylate synthetase 1, domain 2"/>
    <property type="match status" value="1"/>
</dbReference>
<dbReference type="Gene3D" id="3.30.460.10">
    <property type="entry name" value="Beta Polymerase, domain 2"/>
    <property type="match status" value="1"/>
</dbReference>
<dbReference type="InterPro" id="IPR053445">
    <property type="entry name" value="CBASS_cN_synthase"/>
</dbReference>
<dbReference type="InterPro" id="IPR006116">
    <property type="entry name" value="NT_2-5OAS_ClassI-CCAase"/>
</dbReference>
<dbReference type="InterPro" id="IPR043519">
    <property type="entry name" value="NT_sf"/>
</dbReference>
<dbReference type="NCBIfam" id="NF041116">
    <property type="entry name" value="CBASS_cyclase_a"/>
    <property type="match status" value="1"/>
</dbReference>
<dbReference type="PANTHER" id="PTHR11258">
    <property type="entry name" value="2-5 OLIGOADENYLATE SYNTHETASE"/>
    <property type="match status" value="1"/>
</dbReference>
<dbReference type="PANTHER" id="PTHR11258:SF11">
    <property type="entry name" value="C2H2-TYPE DOMAIN-CONTAINING PROTEIN"/>
    <property type="match status" value="1"/>
</dbReference>
<dbReference type="SUPFAM" id="SSF81301">
    <property type="entry name" value="Nucleotidyltransferase"/>
    <property type="match status" value="1"/>
</dbReference>
<dbReference type="SUPFAM" id="SSF81631">
    <property type="entry name" value="PAP/OAS1 substrate-binding domain"/>
    <property type="match status" value="1"/>
</dbReference>
<sequence>MSTEHVDHKTIARFAEDKVNLPKVKADDFREQAKRLQNKLEGYLSDHPDFSLKRMIPSGSLAKGTALRSLNDIDVAVYISGSDAPQDLRGLLDYLADRLRKAFPNFSPDQVKPQTYSVTVSFRGSGLDVDIVPVLYSGLPDWRGHLISQEDGSFLETSIPLHLDFIKARKRAAPKHFAQVVRLAKYWARLMKQERPNFRFKSFMIELILAKLLDNGVDFSNYPEALQAFFSYLVSTELRERIVFEDNYPASKIGTLSDLVQIIDPVNPVNNVARLYTQSNVDAIIDAAMDAGDAIDAAFYAPTKQLTVTYWQKVFGSSFQG</sequence>
<organism>
    <name type="scientific">Escherichia coli (strain MS 115-1)</name>
    <dbReference type="NCBI Taxonomy" id="749537"/>
    <lineage>
        <taxon>Bacteria</taxon>
        <taxon>Pseudomonadati</taxon>
        <taxon>Pseudomonadota</taxon>
        <taxon>Gammaproteobacteria</taxon>
        <taxon>Enterobacterales</taxon>
        <taxon>Enterobacteriaceae</taxon>
        <taxon>Escherichia</taxon>
    </lineage>
</organism>
<evidence type="ECO:0000269" key="1">
    <source>
    </source>
</evidence>
<evidence type="ECO:0000303" key="2">
    <source>
    </source>
</evidence>
<evidence type="ECO:0000303" key="3">
    <source>
    </source>
</evidence>
<evidence type="ECO:0000303" key="4">
    <source>
    </source>
</evidence>
<evidence type="ECO:0000305" key="5">
    <source>
    </source>
</evidence>
<evidence type="ECO:0000305" key="6">
    <source>
    </source>
</evidence>
<evidence type="ECO:0000312" key="7">
    <source>
        <dbReference type="EMBL" id="EFJ98156.1"/>
    </source>
</evidence>
<evidence type="ECO:0007744" key="8">
    <source>
        <dbReference type="PDB" id="6P80"/>
    </source>
</evidence>
<evidence type="ECO:0007744" key="9">
    <source>
        <dbReference type="PDB" id="6P8V"/>
    </source>
</evidence>
<evidence type="ECO:0007744" key="10">
    <source>
        <dbReference type="PDB" id="6U7B"/>
    </source>
</evidence>
<evidence type="ECO:0007829" key="11">
    <source>
        <dbReference type="PDB" id="6P80"/>
    </source>
</evidence>
<evidence type="ECO:0007829" key="12">
    <source>
        <dbReference type="PDB" id="6P8V"/>
    </source>
</evidence>
<evidence type="ECO:0007829" key="13">
    <source>
        <dbReference type="PDB" id="6U7B"/>
    </source>
</evidence>
<proteinExistence type="evidence at protein level"/>
<comment type="function">
    <text evidence="1 4">Cyclic nucleotide synthase (second messenger synthase) of a CBASS antivirus system (PubMed:31932165). CBASS (cyclic oligonucleotide-based antiphage signaling system) provides immunity against bacteriophage. The CD-NTase protein synthesizes cyclic nucleotides in response to infection; these serve as specific second messenger signals. The signals activate a diverse range of effectors, leading to bacterial cell death and thus abortive phage infection. A type III-C(AAA) CBASS system (PubMed:32839535).</text>
</comment>
<comment type="function">
    <text evidence="1">Cyclic nucleotide synthase that upon activation catalyzes the synthesis of 3',3',3'-cyclic AMP-AMP-AMP (3',3',3'-c-tri-AMP or cAAA) as the major product, and 3',3'-c-di-AMP as a minor product. Cannot use GTP as a substrate.</text>
</comment>
<comment type="function">
    <text evidence="1">Protects E.coli strain JP313 against bacteriophage lambda cI- infection. When the cdnC-cap7-cap6-nucC operon is transformed into a susceptible strain it confers bacteriophage immunity. Mutations in the sensor (Cap7 also called HORMA) or effector proteins (CdnC, NucC) but not the disassembly protein (Cap6 also called Trip13) no longer confer immunity. The presence of the intact operon leads to culture collapse and cell death, which occurs before the phage has finished its replication cycle, thus protecting non-infected bacteria by aborting the phage infection and preventing its propagation.</text>
</comment>
<comment type="catalytic activity">
    <reaction evidence="1">
        <text>3 ATP = 3',3',3'-c-tri-AMP + 3 diphosphate</text>
        <dbReference type="Rhea" id="RHEA:72755"/>
        <dbReference type="ChEBI" id="CHEBI:30616"/>
        <dbReference type="ChEBI" id="CHEBI:33019"/>
        <dbReference type="ChEBI" id="CHEBI:192523"/>
    </reaction>
    <physiologicalReaction direction="left-to-right" evidence="6">
        <dbReference type="Rhea" id="RHEA:72756"/>
    </physiologicalReaction>
</comment>
<comment type="catalytic activity">
    <reaction evidence="1">
        <text>2 ATP = 3',3'-c-di-AMP + 2 diphosphate</text>
        <dbReference type="Rhea" id="RHEA:35655"/>
        <dbReference type="ChEBI" id="CHEBI:30616"/>
        <dbReference type="ChEBI" id="CHEBI:33019"/>
        <dbReference type="ChEBI" id="CHEBI:71500"/>
        <dbReference type="EC" id="2.7.7.85"/>
    </reaction>
    <physiologicalReaction direction="left-to-right" evidence="6">
        <dbReference type="Rhea" id="RHEA:35656"/>
    </physiologicalReaction>
</comment>
<comment type="cofactor">
    <cofactor evidence="1">
        <name>Mg(2+)</name>
        <dbReference type="ChEBI" id="CHEBI:18420"/>
    </cofactor>
</comment>
<comment type="activity regulation">
    <text evidence="1">The 2:2 CdnC:Cap7 (Cap7 is also called HORMA) complex is activated for cAAA synthesis by long dsDNA, but not 40 bp dsDNA or ssDNA; the 1:1 complex is inactive in vitro. The 2:2:DNA complex is catalytically disassembled and inactivated by Cap6 (also called Trip13).</text>
</comment>
<comment type="subunit">
    <text evidence="1">Forms complexes with Cap7 with 1:1 and 2:2 stoichimetry, and a 1:1:6 CdnC:Cap7:Cap6 complex.</text>
</comment>
<comment type="domain">
    <text evidence="1">In the disassembly complex (PDB:6P8V) Cap6 (also called Trip13) crystallizes as a right-handed spiral; the top 4 subunits bind ATP while the bottom 2 do not. A CdnC monomer lies along the surface of the hexamer at the interface of subunits 5 and 6, with Cap7 (also called HORMA) at its tip, over the central hexamer pore. The N-terminus of Cap7 extends into the pore, contacting 5/6 Cap6 subunits.</text>
</comment>
<comment type="similarity">
    <text evidence="5">Belongs to the CD-NTase family. A01 subfamily.</text>
</comment>
<comment type="sequence caution" evidence="6">
    <conflict type="erroneous initiation">
        <sequence resource="EMBL-CDS" id="EFJ98156"/>
    </conflict>
    <text>Extended N-terminus.</text>
</comment>
<protein>
    <recommendedName>
        <fullName evidence="3">Cyclic AMP-AMP-AMP synthase</fullName>
        <ecNumber evidence="1">2.7.7.-</ecNumber>
    </recommendedName>
    <alternativeName>
        <fullName evidence="2">CD-NTase018</fullName>
    </alternativeName>
    <alternativeName>
        <fullName evidence="6">c-di-AMP synthase</fullName>
        <ecNumber evidence="1">2.7.7.85</ecNumber>
    </alternativeName>
</protein>